<reference evidence="6" key="1">
    <citation type="journal article" date="2013" name="Toxicon">
        <title>A cytotoxic protein (BF-CT1) purified from Bungarus fasciatus venom acts through apoptosis, modulation of PI3K/AKT, MAPKinase pathway and cell cycle regulation.</title>
        <authorList>
            <person name="Bhattacharya S."/>
            <person name="Das T."/>
            <person name="Biswas A."/>
            <person name="Gomes A."/>
            <person name="Gomes A."/>
            <person name="Dungdung S.R."/>
        </authorList>
    </citation>
    <scope>PROTEIN SEQUENCE</scope>
    <scope>FUNCTION</scope>
    <scope>SUBCELLULAR LOCATION</scope>
    <scope>MASS SPECTROMETRY</scope>
    <source>
        <tissue evidence="4">Venom</tissue>
    </source>
</reference>
<protein>
    <recommendedName>
        <fullName evidence="5">Phospholipase A2 BF-CT1</fullName>
        <shortName>PLA2</shortName>
        <ecNumber evidence="2">3.1.1.4</ecNumber>
    </recommendedName>
    <alternativeName>
        <fullName evidence="2">Phosphatidylcholine 2-acylhydrolase</fullName>
    </alternativeName>
</protein>
<dbReference type="EC" id="3.1.1.4" evidence="2"/>
<dbReference type="GO" id="GO:0005576">
    <property type="term" value="C:extracellular region"/>
    <property type="evidence" value="ECO:0007669"/>
    <property type="project" value="UniProtKB-SubCell"/>
</dbReference>
<dbReference type="GO" id="GO:0046872">
    <property type="term" value="F:metal ion binding"/>
    <property type="evidence" value="ECO:0007669"/>
    <property type="project" value="UniProtKB-KW"/>
</dbReference>
<dbReference type="GO" id="GO:0004623">
    <property type="term" value="F:phospholipase A2 activity"/>
    <property type="evidence" value="ECO:0007669"/>
    <property type="project" value="UniProtKB-EC"/>
</dbReference>
<dbReference type="GO" id="GO:0090729">
    <property type="term" value="F:toxin activity"/>
    <property type="evidence" value="ECO:0007669"/>
    <property type="project" value="UniProtKB-KW"/>
</dbReference>
<dbReference type="GO" id="GO:0016042">
    <property type="term" value="P:lipid catabolic process"/>
    <property type="evidence" value="ECO:0007669"/>
    <property type="project" value="UniProtKB-KW"/>
</dbReference>
<evidence type="ECO:0000250" key="1">
    <source>
        <dbReference type="UniProtKB" id="P0CAS0"/>
    </source>
</evidence>
<evidence type="ECO:0000250" key="2">
    <source>
        <dbReference type="UniProtKB" id="Q10756"/>
    </source>
</evidence>
<evidence type="ECO:0000255" key="3"/>
<evidence type="ECO:0000269" key="4">
    <source>
    </source>
</evidence>
<evidence type="ECO:0000303" key="5">
    <source>
    </source>
</evidence>
<evidence type="ECO:0000305" key="6"/>
<evidence type="ECO:0000305" key="7">
    <source>
    </source>
</evidence>
<keyword id="KW-0106">Calcium</keyword>
<keyword id="KW-0903">Direct protein sequencing</keyword>
<keyword id="KW-0378">Hydrolase</keyword>
<keyword id="KW-0442">Lipid degradation</keyword>
<keyword id="KW-0443">Lipid metabolism</keyword>
<keyword id="KW-0479">Metal-binding</keyword>
<keyword id="KW-0964">Secreted</keyword>
<keyword id="KW-0800">Toxin</keyword>
<comment type="function">
    <text evidence="2 4">PLA2 catalyzes the calcium-dependent hydrolysis of the 2-acyl groups in 3-sn-phosphoglycerides (By similarity). Cytotoxic in Ehrlich ascites carcinoma model in mice and towards human cancer cell line U937 (IC(50)=610 ug/ml) (PubMed:23981271). Acts through apoptosis, modulation of PI3K/AKT, MAPKinase pathway and cell cycle regulation (PubMed:23981271).</text>
</comment>
<comment type="catalytic activity">
    <reaction evidence="2 7">
        <text>a 1,2-diacyl-sn-glycero-3-phosphocholine + H2O = a 1-acyl-sn-glycero-3-phosphocholine + a fatty acid + H(+)</text>
        <dbReference type="Rhea" id="RHEA:15801"/>
        <dbReference type="ChEBI" id="CHEBI:15377"/>
        <dbReference type="ChEBI" id="CHEBI:15378"/>
        <dbReference type="ChEBI" id="CHEBI:28868"/>
        <dbReference type="ChEBI" id="CHEBI:57643"/>
        <dbReference type="ChEBI" id="CHEBI:58168"/>
        <dbReference type="EC" id="3.1.1.4"/>
    </reaction>
</comment>
<comment type="cofactor">
    <cofactor evidence="1">
        <name>Ca(2+)</name>
        <dbReference type="ChEBI" id="CHEBI:29108"/>
    </cofactor>
    <text evidence="1">Binds 1 Ca(2+) ion.</text>
</comment>
<comment type="subcellular location">
    <subcellularLocation>
        <location evidence="4">Secreted</location>
    </subcellularLocation>
</comment>
<comment type="tissue specificity">
    <text evidence="7">Expressed by the venom gland.</text>
</comment>
<comment type="mass spectrometry" mass="13044.67" method="MALDI" evidence="4"/>
<comment type="miscellaneous">
    <text evidence="4">Is not lethal to mice up to 4.7 mg/kg by intraperitoneal injection.</text>
</comment>
<comment type="similarity">
    <text evidence="3">Belongs to the phospholipase A2 family. Group I subfamily.</text>
</comment>
<sequence length="16" mass="1830">NLYQFKNMIEEAATGT</sequence>
<organism>
    <name type="scientific">Bungarus fasciatus</name>
    <name type="common">Banded krait</name>
    <name type="synonym">Pseudoboa fasciata</name>
    <dbReference type="NCBI Taxonomy" id="8613"/>
    <lineage>
        <taxon>Eukaryota</taxon>
        <taxon>Metazoa</taxon>
        <taxon>Chordata</taxon>
        <taxon>Craniata</taxon>
        <taxon>Vertebrata</taxon>
        <taxon>Euteleostomi</taxon>
        <taxon>Lepidosauria</taxon>
        <taxon>Squamata</taxon>
        <taxon>Bifurcata</taxon>
        <taxon>Unidentata</taxon>
        <taxon>Episquamata</taxon>
        <taxon>Toxicofera</taxon>
        <taxon>Serpentes</taxon>
        <taxon>Colubroidea</taxon>
        <taxon>Elapidae</taxon>
        <taxon>Bungarinae</taxon>
        <taxon>Bungarus</taxon>
    </lineage>
</organism>
<feature type="chain" id="PRO_0000429376" description="Phospholipase A2 BF-CT1">
    <location>
        <begin position="1"/>
        <end position="16" status="greater than"/>
    </location>
</feature>
<feature type="non-terminal residue" evidence="5">
    <location>
        <position position="16"/>
    </location>
</feature>
<proteinExistence type="evidence at protein level"/>
<accession>B3EWQ8</accession>
<name>PA2_BUNFA</name>